<proteinExistence type="inferred from homology"/>
<reference key="1">
    <citation type="journal article" date="2003" name="Nat. Biotechnol.">
        <title>The genome sequence of the entomopathogenic bacterium Photorhabdus luminescens.</title>
        <authorList>
            <person name="Duchaud E."/>
            <person name="Rusniok C."/>
            <person name="Frangeul L."/>
            <person name="Buchrieser C."/>
            <person name="Givaudan A."/>
            <person name="Taourit S."/>
            <person name="Bocs S."/>
            <person name="Boursaux-Eude C."/>
            <person name="Chandler M."/>
            <person name="Charles J.-F."/>
            <person name="Dassa E."/>
            <person name="Derose R."/>
            <person name="Derzelle S."/>
            <person name="Freyssinet G."/>
            <person name="Gaudriault S."/>
            <person name="Medigue C."/>
            <person name="Lanois A."/>
            <person name="Powell K."/>
            <person name="Siguier P."/>
            <person name="Vincent R."/>
            <person name="Wingate V."/>
            <person name="Zouine M."/>
            <person name="Glaser P."/>
            <person name="Boemare N."/>
            <person name="Danchin A."/>
            <person name="Kunst F."/>
        </authorList>
    </citation>
    <scope>NUCLEOTIDE SEQUENCE [LARGE SCALE GENOMIC DNA]</scope>
    <source>
        <strain>DSM 15139 / CIP 105565 / TT01</strain>
    </source>
</reference>
<keyword id="KW-1185">Reference proteome</keyword>
<keyword id="KW-0687">Ribonucleoprotein</keyword>
<keyword id="KW-0689">Ribosomal protein</keyword>
<keyword id="KW-0694">RNA-binding</keyword>
<keyword id="KW-0699">rRNA-binding</keyword>
<dbReference type="EMBL" id="BX571860">
    <property type="protein sequence ID" value="CAE12884.1"/>
    <property type="molecule type" value="Genomic_DNA"/>
</dbReference>
<dbReference type="RefSeq" id="WP_011144968.1">
    <property type="nucleotide sequence ID" value="NC_005126.1"/>
</dbReference>
<dbReference type="SMR" id="Q7N8X4"/>
<dbReference type="STRING" id="243265.plu0589"/>
<dbReference type="GeneID" id="48846876"/>
<dbReference type="KEGG" id="plu:plu0589"/>
<dbReference type="eggNOG" id="COG0268">
    <property type="taxonomic scope" value="Bacteria"/>
</dbReference>
<dbReference type="HOGENOM" id="CLU_160655_4_0_6"/>
<dbReference type="OrthoDB" id="9807974at2"/>
<dbReference type="Proteomes" id="UP000002514">
    <property type="component" value="Chromosome"/>
</dbReference>
<dbReference type="GO" id="GO:0005829">
    <property type="term" value="C:cytosol"/>
    <property type="evidence" value="ECO:0007669"/>
    <property type="project" value="TreeGrafter"/>
</dbReference>
<dbReference type="GO" id="GO:0015935">
    <property type="term" value="C:small ribosomal subunit"/>
    <property type="evidence" value="ECO:0007669"/>
    <property type="project" value="TreeGrafter"/>
</dbReference>
<dbReference type="GO" id="GO:0070181">
    <property type="term" value="F:small ribosomal subunit rRNA binding"/>
    <property type="evidence" value="ECO:0007669"/>
    <property type="project" value="TreeGrafter"/>
</dbReference>
<dbReference type="GO" id="GO:0003735">
    <property type="term" value="F:structural constituent of ribosome"/>
    <property type="evidence" value="ECO:0007669"/>
    <property type="project" value="InterPro"/>
</dbReference>
<dbReference type="GO" id="GO:0006412">
    <property type="term" value="P:translation"/>
    <property type="evidence" value="ECO:0007669"/>
    <property type="project" value="UniProtKB-UniRule"/>
</dbReference>
<dbReference type="FunFam" id="1.20.58.110:FF:000001">
    <property type="entry name" value="30S ribosomal protein S20"/>
    <property type="match status" value="1"/>
</dbReference>
<dbReference type="Gene3D" id="1.20.58.110">
    <property type="entry name" value="Ribosomal protein S20"/>
    <property type="match status" value="1"/>
</dbReference>
<dbReference type="HAMAP" id="MF_00500">
    <property type="entry name" value="Ribosomal_bS20"/>
    <property type="match status" value="1"/>
</dbReference>
<dbReference type="InterPro" id="IPR002583">
    <property type="entry name" value="Ribosomal_bS20"/>
</dbReference>
<dbReference type="InterPro" id="IPR036510">
    <property type="entry name" value="Ribosomal_bS20_sf"/>
</dbReference>
<dbReference type="NCBIfam" id="TIGR00029">
    <property type="entry name" value="S20"/>
    <property type="match status" value="1"/>
</dbReference>
<dbReference type="PANTHER" id="PTHR33398">
    <property type="entry name" value="30S RIBOSOMAL PROTEIN S20"/>
    <property type="match status" value="1"/>
</dbReference>
<dbReference type="PANTHER" id="PTHR33398:SF1">
    <property type="entry name" value="SMALL RIBOSOMAL SUBUNIT PROTEIN BS20C"/>
    <property type="match status" value="1"/>
</dbReference>
<dbReference type="Pfam" id="PF01649">
    <property type="entry name" value="Ribosomal_S20p"/>
    <property type="match status" value="1"/>
</dbReference>
<dbReference type="SUPFAM" id="SSF46992">
    <property type="entry name" value="Ribosomal protein S20"/>
    <property type="match status" value="1"/>
</dbReference>
<sequence length="87" mass="9852">MANIKSAKKRAIQSEKRRKHNASRRSMVRTFIKKVYAAIATGDKEAAQKAFHDMQPIVDRHACKGLIHKNKAARHKSNLTAQINAMQ</sequence>
<protein>
    <recommendedName>
        <fullName evidence="1">Small ribosomal subunit protein bS20</fullName>
    </recommendedName>
    <alternativeName>
        <fullName evidence="3">30S ribosomal protein S20</fullName>
    </alternativeName>
</protein>
<feature type="chain" id="PRO_0000168006" description="Small ribosomal subunit protein bS20">
    <location>
        <begin position="1"/>
        <end position="87"/>
    </location>
</feature>
<feature type="region of interest" description="Disordered" evidence="2">
    <location>
        <begin position="1"/>
        <end position="26"/>
    </location>
</feature>
<organism>
    <name type="scientific">Photorhabdus laumondii subsp. laumondii (strain DSM 15139 / CIP 105565 / TT01)</name>
    <name type="common">Photorhabdus luminescens subsp. laumondii</name>
    <dbReference type="NCBI Taxonomy" id="243265"/>
    <lineage>
        <taxon>Bacteria</taxon>
        <taxon>Pseudomonadati</taxon>
        <taxon>Pseudomonadota</taxon>
        <taxon>Gammaproteobacteria</taxon>
        <taxon>Enterobacterales</taxon>
        <taxon>Morganellaceae</taxon>
        <taxon>Photorhabdus</taxon>
    </lineage>
</organism>
<gene>
    <name evidence="1" type="primary">rpsT</name>
    <name type="ordered locus">plu0589</name>
</gene>
<evidence type="ECO:0000255" key="1">
    <source>
        <dbReference type="HAMAP-Rule" id="MF_00500"/>
    </source>
</evidence>
<evidence type="ECO:0000256" key="2">
    <source>
        <dbReference type="SAM" id="MobiDB-lite"/>
    </source>
</evidence>
<evidence type="ECO:0000305" key="3"/>
<name>RS20_PHOLL</name>
<accession>Q7N8X4</accession>
<comment type="function">
    <text evidence="1">Binds directly to 16S ribosomal RNA.</text>
</comment>
<comment type="similarity">
    <text evidence="1">Belongs to the bacterial ribosomal protein bS20 family.</text>
</comment>